<name>RL5_CLOPS</name>
<sequence>MNRLQERYEKEVVPAMMEKFGYKNIMQVPKIEKVVINMGVGEAKDNPKVLESAVSDLQIIAGQKPVLTRAKKSVANFKIRENMALGCKVTLRKTNMYEFVDKLVSIALPRVRDFRGVSAKAFDGRGNYSLGIKEQLIFPEIEYDKVDKVRGMDIIFVTSANTDEEARELLRFLGMPFAQ</sequence>
<organism>
    <name type="scientific">Clostridium perfringens (strain SM101 / Type A)</name>
    <dbReference type="NCBI Taxonomy" id="289380"/>
    <lineage>
        <taxon>Bacteria</taxon>
        <taxon>Bacillati</taxon>
        <taxon>Bacillota</taxon>
        <taxon>Clostridia</taxon>
        <taxon>Eubacteriales</taxon>
        <taxon>Clostridiaceae</taxon>
        <taxon>Clostridium</taxon>
    </lineage>
</organism>
<dbReference type="EMBL" id="CP000312">
    <property type="protein sequence ID" value="ABG87675.1"/>
    <property type="molecule type" value="Genomic_DNA"/>
</dbReference>
<dbReference type="RefSeq" id="WP_003454431.1">
    <property type="nucleotide sequence ID" value="NZ_CAXVKH010000004.1"/>
</dbReference>
<dbReference type="SMR" id="Q0SQF6"/>
<dbReference type="GeneID" id="93001021"/>
<dbReference type="KEGG" id="cpr:CPR_2387"/>
<dbReference type="Proteomes" id="UP000001824">
    <property type="component" value="Chromosome"/>
</dbReference>
<dbReference type="GO" id="GO:1990904">
    <property type="term" value="C:ribonucleoprotein complex"/>
    <property type="evidence" value="ECO:0007669"/>
    <property type="project" value="UniProtKB-KW"/>
</dbReference>
<dbReference type="GO" id="GO:0005840">
    <property type="term" value="C:ribosome"/>
    <property type="evidence" value="ECO:0007669"/>
    <property type="project" value="UniProtKB-KW"/>
</dbReference>
<dbReference type="GO" id="GO:0019843">
    <property type="term" value="F:rRNA binding"/>
    <property type="evidence" value="ECO:0007669"/>
    <property type="project" value="UniProtKB-UniRule"/>
</dbReference>
<dbReference type="GO" id="GO:0003735">
    <property type="term" value="F:structural constituent of ribosome"/>
    <property type="evidence" value="ECO:0007669"/>
    <property type="project" value="InterPro"/>
</dbReference>
<dbReference type="GO" id="GO:0000049">
    <property type="term" value="F:tRNA binding"/>
    <property type="evidence" value="ECO:0007669"/>
    <property type="project" value="UniProtKB-UniRule"/>
</dbReference>
<dbReference type="GO" id="GO:0006412">
    <property type="term" value="P:translation"/>
    <property type="evidence" value="ECO:0007669"/>
    <property type="project" value="UniProtKB-UniRule"/>
</dbReference>
<dbReference type="FunFam" id="3.30.1440.10:FF:000001">
    <property type="entry name" value="50S ribosomal protein L5"/>
    <property type="match status" value="1"/>
</dbReference>
<dbReference type="Gene3D" id="3.30.1440.10">
    <property type="match status" value="1"/>
</dbReference>
<dbReference type="HAMAP" id="MF_01333_B">
    <property type="entry name" value="Ribosomal_uL5_B"/>
    <property type="match status" value="1"/>
</dbReference>
<dbReference type="InterPro" id="IPR002132">
    <property type="entry name" value="Ribosomal_uL5"/>
</dbReference>
<dbReference type="InterPro" id="IPR020930">
    <property type="entry name" value="Ribosomal_uL5_bac-type"/>
</dbReference>
<dbReference type="InterPro" id="IPR031309">
    <property type="entry name" value="Ribosomal_uL5_C"/>
</dbReference>
<dbReference type="InterPro" id="IPR020929">
    <property type="entry name" value="Ribosomal_uL5_CS"/>
</dbReference>
<dbReference type="InterPro" id="IPR022803">
    <property type="entry name" value="Ribosomal_uL5_dom_sf"/>
</dbReference>
<dbReference type="InterPro" id="IPR031310">
    <property type="entry name" value="Ribosomal_uL5_N"/>
</dbReference>
<dbReference type="NCBIfam" id="NF000585">
    <property type="entry name" value="PRK00010.1"/>
    <property type="match status" value="1"/>
</dbReference>
<dbReference type="PANTHER" id="PTHR11994">
    <property type="entry name" value="60S RIBOSOMAL PROTEIN L11-RELATED"/>
    <property type="match status" value="1"/>
</dbReference>
<dbReference type="Pfam" id="PF00281">
    <property type="entry name" value="Ribosomal_L5"/>
    <property type="match status" value="1"/>
</dbReference>
<dbReference type="Pfam" id="PF00673">
    <property type="entry name" value="Ribosomal_L5_C"/>
    <property type="match status" value="1"/>
</dbReference>
<dbReference type="PIRSF" id="PIRSF002161">
    <property type="entry name" value="Ribosomal_L5"/>
    <property type="match status" value="1"/>
</dbReference>
<dbReference type="SUPFAM" id="SSF55282">
    <property type="entry name" value="RL5-like"/>
    <property type="match status" value="1"/>
</dbReference>
<dbReference type="PROSITE" id="PS00358">
    <property type="entry name" value="RIBOSOMAL_L5"/>
    <property type="match status" value="1"/>
</dbReference>
<accession>Q0SQF6</accession>
<keyword id="KW-0687">Ribonucleoprotein</keyword>
<keyword id="KW-0689">Ribosomal protein</keyword>
<keyword id="KW-0694">RNA-binding</keyword>
<keyword id="KW-0699">rRNA-binding</keyword>
<keyword id="KW-0820">tRNA-binding</keyword>
<proteinExistence type="inferred from homology"/>
<gene>
    <name evidence="1" type="primary">rplE</name>
    <name type="ordered locus">CPR_2387</name>
</gene>
<evidence type="ECO:0000255" key="1">
    <source>
        <dbReference type="HAMAP-Rule" id="MF_01333"/>
    </source>
</evidence>
<evidence type="ECO:0000305" key="2"/>
<reference key="1">
    <citation type="journal article" date="2006" name="Genome Res.">
        <title>Skewed genomic variability in strains of the toxigenic bacterial pathogen, Clostridium perfringens.</title>
        <authorList>
            <person name="Myers G.S.A."/>
            <person name="Rasko D.A."/>
            <person name="Cheung J.K."/>
            <person name="Ravel J."/>
            <person name="Seshadri R."/>
            <person name="DeBoy R.T."/>
            <person name="Ren Q."/>
            <person name="Varga J."/>
            <person name="Awad M.M."/>
            <person name="Brinkac L.M."/>
            <person name="Daugherty S.C."/>
            <person name="Haft D.H."/>
            <person name="Dodson R.J."/>
            <person name="Madupu R."/>
            <person name="Nelson W.C."/>
            <person name="Rosovitz M.J."/>
            <person name="Sullivan S.A."/>
            <person name="Khouri H."/>
            <person name="Dimitrov G.I."/>
            <person name="Watkins K.L."/>
            <person name="Mulligan S."/>
            <person name="Benton J."/>
            <person name="Radune D."/>
            <person name="Fisher D.J."/>
            <person name="Atkins H.S."/>
            <person name="Hiscox T."/>
            <person name="Jost B.H."/>
            <person name="Billington S.J."/>
            <person name="Songer J.G."/>
            <person name="McClane B.A."/>
            <person name="Titball R.W."/>
            <person name="Rood J.I."/>
            <person name="Melville S.B."/>
            <person name="Paulsen I.T."/>
        </authorList>
    </citation>
    <scope>NUCLEOTIDE SEQUENCE [LARGE SCALE GENOMIC DNA]</scope>
    <source>
        <strain>SM101 / Type A</strain>
    </source>
</reference>
<comment type="function">
    <text evidence="1">This is one of the proteins that bind and probably mediate the attachment of the 5S RNA into the large ribosomal subunit, where it forms part of the central protuberance. In the 70S ribosome it contacts protein S13 of the 30S subunit (bridge B1b), connecting the 2 subunits; this bridge is implicated in subunit movement. Contacts the P site tRNA; the 5S rRNA and some of its associated proteins might help stabilize positioning of ribosome-bound tRNAs.</text>
</comment>
<comment type="subunit">
    <text evidence="1">Part of the 50S ribosomal subunit; part of the 5S rRNA/L5/L18/L25 subcomplex. Contacts the 5S rRNA and the P site tRNA. Forms a bridge to the 30S subunit in the 70S ribosome.</text>
</comment>
<comment type="similarity">
    <text evidence="1">Belongs to the universal ribosomal protein uL5 family.</text>
</comment>
<protein>
    <recommendedName>
        <fullName evidence="1">Large ribosomal subunit protein uL5</fullName>
    </recommendedName>
    <alternativeName>
        <fullName evidence="2">50S ribosomal protein L5</fullName>
    </alternativeName>
</protein>
<feature type="chain" id="PRO_1000052724" description="Large ribosomal subunit protein uL5">
    <location>
        <begin position="1"/>
        <end position="179"/>
    </location>
</feature>